<dbReference type="EMBL" id="CP000431">
    <property type="protein sequence ID" value="ABG97920.1"/>
    <property type="molecule type" value="Genomic_DNA"/>
</dbReference>
<dbReference type="RefSeq" id="WP_005239639.1">
    <property type="nucleotide sequence ID" value="NC_008268.1"/>
</dbReference>
<dbReference type="SMR" id="Q0S3G6"/>
<dbReference type="GeneID" id="69890526"/>
<dbReference type="KEGG" id="rha:RHA1_ro06143"/>
<dbReference type="eggNOG" id="COG0093">
    <property type="taxonomic scope" value="Bacteria"/>
</dbReference>
<dbReference type="HOGENOM" id="CLU_095071_2_1_11"/>
<dbReference type="OrthoDB" id="9806379at2"/>
<dbReference type="Proteomes" id="UP000008710">
    <property type="component" value="Chromosome"/>
</dbReference>
<dbReference type="GO" id="GO:0022625">
    <property type="term" value="C:cytosolic large ribosomal subunit"/>
    <property type="evidence" value="ECO:0007669"/>
    <property type="project" value="TreeGrafter"/>
</dbReference>
<dbReference type="GO" id="GO:0070180">
    <property type="term" value="F:large ribosomal subunit rRNA binding"/>
    <property type="evidence" value="ECO:0007669"/>
    <property type="project" value="TreeGrafter"/>
</dbReference>
<dbReference type="GO" id="GO:0003735">
    <property type="term" value="F:structural constituent of ribosome"/>
    <property type="evidence" value="ECO:0007669"/>
    <property type="project" value="InterPro"/>
</dbReference>
<dbReference type="GO" id="GO:0006412">
    <property type="term" value="P:translation"/>
    <property type="evidence" value="ECO:0007669"/>
    <property type="project" value="UniProtKB-UniRule"/>
</dbReference>
<dbReference type="CDD" id="cd00337">
    <property type="entry name" value="Ribosomal_uL14"/>
    <property type="match status" value="1"/>
</dbReference>
<dbReference type="FunFam" id="2.40.150.20:FF:000001">
    <property type="entry name" value="50S ribosomal protein L14"/>
    <property type="match status" value="1"/>
</dbReference>
<dbReference type="Gene3D" id="2.40.150.20">
    <property type="entry name" value="Ribosomal protein L14"/>
    <property type="match status" value="1"/>
</dbReference>
<dbReference type="HAMAP" id="MF_01367">
    <property type="entry name" value="Ribosomal_uL14"/>
    <property type="match status" value="1"/>
</dbReference>
<dbReference type="InterPro" id="IPR000218">
    <property type="entry name" value="Ribosomal_uL14"/>
</dbReference>
<dbReference type="InterPro" id="IPR005745">
    <property type="entry name" value="Ribosomal_uL14_bac-type"/>
</dbReference>
<dbReference type="InterPro" id="IPR019972">
    <property type="entry name" value="Ribosomal_uL14_CS"/>
</dbReference>
<dbReference type="InterPro" id="IPR036853">
    <property type="entry name" value="Ribosomal_uL14_sf"/>
</dbReference>
<dbReference type="NCBIfam" id="TIGR01067">
    <property type="entry name" value="rplN_bact"/>
    <property type="match status" value="1"/>
</dbReference>
<dbReference type="PANTHER" id="PTHR11761">
    <property type="entry name" value="50S/60S RIBOSOMAL PROTEIN L14/L23"/>
    <property type="match status" value="1"/>
</dbReference>
<dbReference type="PANTHER" id="PTHR11761:SF3">
    <property type="entry name" value="LARGE RIBOSOMAL SUBUNIT PROTEIN UL14M"/>
    <property type="match status" value="1"/>
</dbReference>
<dbReference type="Pfam" id="PF00238">
    <property type="entry name" value="Ribosomal_L14"/>
    <property type="match status" value="1"/>
</dbReference>
<dbReference type="SMART" id="SM01374">
    <property type="entry name" value="Ribosomal_L14"/>
    <property type="match status" value="1"/>
</dbReference>
<dbReference type="SUPFAM" id="SSF50193">
    <property type="entry name" value="Ribosomal protein L14"/>
    <property type="match status" value="1"/>
</dbReference>
<dbReference type="PROSITE" id="PS00049">
    <property type="entry name" value="RIBOSOMAL_L14"/>
    <property type="match status" value="1"/>
</dbReference>
<comment type="function">
    <text evidence="1">Binds to 23S rRNA. Forms part of two intersubunit bridges in the 70S ribosome.</text>
</comment>
<comment type="subunit">
    <text evidence="1">Part of the 50S ribosomal subunit. Forms a cluster with proteins L3 and L19. In the 70S ribosome, L14 and L19 interact and together make contacts with the 16S rRNA in bridges B5 and B8.</text>
</comment>
<comment type="similarity">
    <text evidence="1">Belongs to the universal ribosomal protein uL14 family.</text>
</comment>
<reference key="1">
    <citation type="journal article" date="2006" name="Proc. Natl. Acad. Sci. U.S.A.">
        <title>The complete genome of Rhodococcus sp. RHA1 provides insights into a catabolic powerhouse.</title>
        <authorList>
            <person name="McLeod M.P."/>
            <person name="Warren R.L."/>
            <person name="Hsiao W.W.L."/>
            <person name="Araki N."/>
            <person name="Myhre M."/>
            <person name="Fernandes C."/>
            <person name="Miyazawa D."/>
            <person name="Wong W."/>
            <person name="Lillquist A.L."/>
            <person name="Wang D."/>
            <person name="Dosanjh M."/>
            <person name="Hara H."/>
            <person name="Petrescu A."/>
            <person name="Morin R.D."/>
            <person name="Yang G."/>
            <person name="Stott J.M."/>
            <person name="Schein J.E."/>
            <person name="Shin H."/>
            <person name="Smailus D."/>
            <person name="Siddiqui A.S."/>
            <person name="Marra M.A."/>
            <person name="Jones S.J.M."/>
            <person name="Holt R."/>
            <person name="Brinkman F.S.L."/>
            <person name="Miyauchi K."/>
            <person name="Fukuda M."/>
            <person name="Davies J.E."/>
            <person name="Mohn W.W."/>
            <person name="Eltis L.D."/>
        </authorList>
    </citation>
    <scope>NUCLEOTIDE SEQUENCE [LARGE SCALE GENOMIC DNA]</scope>
    <source>
        <strain>RHA1</strain>
    </source>
</reference>
<accession>Q0S3G6</accession>
<protein>
    <recommendedName>
        <fullName evidence="1">Large ribosomal subunit protein uL14</fullName>
    </recommendedName>
    <alternativeName>
        <fullName evidence="2">50S ribosomal protein L14</fullName>
    </alternativeName>
</protein>
<sequence length="122" mass="13444">MIQQESRLRVADNTGAKEILCIRVLGGSSRRYAGIGDIIVATVKDAIPGGNIKKGEVVKAVIVRTTKERRRPDGSYIKFDENAAVLIKPDNDPRGTRIFGPVGRELREKKFMKIVSLAPEVL</sequence>
<feature type="chain" id="PRO_0000266542" description="Large ribosomal subunit protein uL14">
    <location>
        <begin position="1"/>
        <end position="122"/>
    </location>
</feature>
<organism>
    <name type="scientific">Rhodococcus jostii (strain RHA1)</name>
    <dbReference type="NCBI Taxonomy" id="101510"/>
    <lineage>
        <taxon>Bacteria</taxon>
        <taxon>Bacillati</taxon>
        <taxon>Actinomycetota</taxon>
        <taxon>Actinomycetes</taxon>
        <taxon>Mycobacteriales</taxon>
        <taxon>Nocardiaceae</taxon>
        <taxon>Rhodococcus</taxon>
    </lineage>
</organism>
<gene>
    <name evidence="1" type="primary">rplN</name>
    <name type="ordered locus">RHA1_ro06143</name>
</gene>
<name>RL14_RHOJR</name>
<keyword id="KW-0687">Ribonucleoprotein</keyword>
<keyword id="KW-0689">Ribosomal protein</keyword>
<keyword id="KW-0694">RNA-binding</keyword>
<keyword id="KW-0699">rRNA-binding</keyword>
<evidence type="ECO:0000255" key="1">
    <source>
        <dbReference type="HAMAP-Rule" id="MF_01367"/>
    </source>
</evidence>
<evidence type="ECO:0000305" key="2"/>
<proteinExistence type="inferred from homology"/>